<comment type="function">
    <text evidence="4">Probable transcription factor that acts with partial redundancy with HULK1 and HULK2. Plays diverse and essential roles in the control of plant development, physiology and flowering time.</text>
</comment>
<comment type="subcellular location">
    <subcellularLocation>
        <location evidence="4">Nucleus</location>
    </subcellularLocation>
</comment>
<comment type="tissue specificity">
    <text evidence="4">Expressed throughout young primordia, and vegetative and reproductive apices.</text>
</comment>
<comment type="disruption phenotype">
    <text evidence="4">No visible phenotype under normal growth conditions, but the triple mutant plants hulk1, hulk2 and hulk3 show delayed flowering.</text>
</comment>
<comment type="sequence caution" evidence="6">
    <conflict type="erroneous gene model prediction">
        <sequence resource="EMBL-CDS" id="CAB87752"/>
    </conflict>
</comment>
<evidence type="ECO:0000255" key="1">
    <source>
        <dbReference type="PROSITE-ProRule" id="PRU00162"/>
    </source>
</evidence>
<evidence type="ECO:0000255" key="2">
    <source>
        <dbReference type="PROSITE-ProRule" id="PRU00724"/>
    </source>
</evidence>
<evidence type="ECO:0000256" key="3">
    <source>
        <dbReference type="SAM" id="MobiDB-lite"/>
    </source>
</evidence>
<evidence type="ECO:0000269" key="4">
    <source>
    </source>
</evidence>
<evidence type="ECO:0000303" key="5">
    <source>
    </source>
</evidence>
<evidence type="ECO:0000305" key="6"/>
<evidence type="ECO:0000312" key="7">
    <source>
        <dbReference type="Araport" id="AT3G63070"/>
    </source>
</evidence>
<feature type="chain" id="PRO_0000418858" description="Protein HUA2-LIKE 3">
    <location>
        <begin position="1"/>
        <end position="1347"/>
    </location>
</feature>
<feature type="domain" description="PWWP" evidence="1">
    <location>
        <begin position="24"/>
        <end position="81"/>
    </location>
</feature>
<feature type="domain" description="CID" evidence="2">
    <location>
        <begin position="845"/>
        <end position="986"/>
    </location>
</feature>
<feature type="region of interest" description="Disordered" evidence="3">
    <location>
        <begin position="110"/>
        <end position="137"/>
    </location>
</feature>
<feature type="region of interest" description="Disordered" evidence="3">
    <location>
        <begin position="251"/>
        <end position="320"/>
    </location>
</feature>
<feature type="region of interest" description="Disordered" evidence="3">
    <location>
        <begin position="383"/>
        <end position="402"/>
    </location>
</feature>
<feature type="region of interest" description="Disordered" evidence="3">
    <location>
        <begin position="1037"/>
        <end position="1069"/>
    </location>
</feature>
<feature type="region of interest" description="Disordered" evidence="3">
    <location>
        <begin position="1121"/>
        <end position="1140"/>
    </location>
</feature>
<feature type="region of interest" description="Disordered" evidence="3">
    <location>
        <begin position="1147"/>
        <end position="1223"/>
    </location>
</feature>
<feature type="region of interest" description="Disordered" evidence="3">
    <location>
        <begin position="1259"/>
        <end position="1347"/>
    </location>
</feature>
<feature type="compositionally biased region" description="Polar residues" evidence="3">
    <location>
        <begin position="127"/>
        <end position="137"/>
    </location>
</feature>
<feature type="compositionally biased region" description="Low complexity" evidence="3">
    <location>
        <begin position="302"/>
        <end position="314"/>
    </location>
</feature>
<feature type="compositionally biased region" description="Basic and acidic residues" evidence="3">
    <location>
        <begin position="390"/>
        <end position="402"/>
    </location>
</feature>
<feature type="compositionally biased region" description="Acidic residues" evidence="3">
    <location>
        <begin position="1038"/>
        <end position="1049"/>
    </location>
</feature>
<feature type="compositionally biased region" description="Basic and acidic residues" evidence="3">
    <location>
        <begin position="1054"/>
        <end position="1069"/>
    </location>
</feature>
<feature type="compositionally biased region" description="Polar residues" evidence="3">
    <location>
        <begin position="1181"/>
        <end position="1191"/>
    </location>
</feature>
<feature type="compositionally biased region" description="Pro residues" evidence="3">
    <location>
        <begin position="1208"/>
        <end position="1217"/>
    </location>
</feature>
<feature type="compositionally biased region" description="Basic and acidic residues" evidence="3">
    <location>
        <begin position="1259"/>
        <end position="1272"/>
    </location>
</feature>
<keyword id="KW-0217">Developmental protein</keyword>
<keyword id="KW-0287">Flowering</keyword>
<keyword id="KW-0507">mRNA processing</keyword>
<keyword id="KW-0539">Nucleus</keyword>
<keyword id="KW-1185">Reference proteome</keyword>
<keyword id="KW-0804">Transcription</keyword>
<keyword id="KW-0805">Transcription regulation</keyword>
<accession>F4IZM8</accession>
<accession>Q9LYB5</accession>
<name>HUAL3_ARATH</name>
<dbReference type="EMBL" id="AL163816">
    <property type="protein sequence ID" value="CAB87752.1"/>
    <property type="status" value="ALT_SEQ"/>
    <property type="molecule type" value="Genomic_DNA"/>
</dbReference>
<dbReference type="EMBL" id="CP002686">
    <property type="protein sequence ID" value="AEE80431.1"/>
    <property type="molecule type" value="Genomic_DNA"/>
</dbReference>
<dbReference type="PIR" id="T48096">
    <property type="entry name" value="T48096"/>
</dbReference>
<dbReference type="RefSeq" id="NP_191866.3">
    <property type="nucleotide sequence ID" value="NM_116172.3"/>
</dbReference>
<dbReference type="SMR" id="F4IZM8"/>
<dbReference type="FunCoup" id="F4IZM8">
    <property type="interactions" value="1715"/>
</dbReference>
<dbReference type="STRING" id="3702.F4IZM8"/>
<dbReference type="iPTMnet" id="F4IZM8"/>
<dbReference type="PaxDb" id="3702-AT3G63070.1"/>
<dbReference type="ProteomicsDB" id="232177"/>
<dbReference type="EnsemblPlants" id="AT3G63070.1">
    <property type="protein sequence ID" value="AT3G63070.1"/>
    <property type="gene ID" value="AT3G63070"/>
</dbReference>
<dbReference type="GeneID" id="825482"/>
<dbReference type="Gramene" id="AT3G63070.1">
    <property type="protein sequence ID" value="AT3G63070.1"/>
    <property type="gene ID" value="AT3G63070"/>
</dbReference>
<dbReference type="KEGG" id="ath:AT3G63070"/>
<dbReference type="Araport" id="AT3G63070"/>
<dbReference type="TAIR" id="AT3G63070">
    <property type="gene designation" value="HULK3"/>
</dbReference>
<dbReference type="eggNOG" id="KOG1904">
    <property type="taxonomic scope" value="Eukaryota"/>
</dbReference>
<dbReference type="HOGENOM" id="CLU_004888_0_0_1"/>
<dbReference type="InParanoid" id="F4IZM8"/>
<dbReference type="OMA" id="NERPCEE"/>
<dbReference type="PRO" id="PR:F4IZM8"/>
<dbReference type="Proteomes" id="UP000006548">
    <property type="component" value="Chromosome 3"/>
</dbReference>
<dbReference type="ExpressionAtlas" id="F4IZM8">
    <property type="expression patterns" value="baseline and differential"/>
</dbReference>
<dbReference type="GO" id="GO:0005634">
    <property type="term" value="C:nucleus"/>
    <property type="evidence" value="ECO:0000314"/>
    <property type="project" value="TAIR"/>
</dbReference>
<dbReference type="GO" id="GO:0009908">
    <property type="term" value="P:flower development"/>
    <property type="evidence" value="ECO:0007669"/>
    <property type="project" value="UniProtKB-KW"/>
</dbReference>
<dbReference type="GO" id="GO:0006397">
    <property type="term" value="P:mRNA processing"/>
    <property type="evidence" value="ECO:0007669"/>
    <property type="project" value="UniProtKB-KW"/>
</dbReference>
<dbReference type="CDD" id="cd20147">
    <property type="entry name" value="PWWP_HULK"/>
    <property type="match status" value="1"/>
</dbReference>
<dbReference type="FunFam" id="1.25.40.90:FF:000037">
    <property type="entry name" value="Enhancer of ag-4 2"/>
    <property type="match status" value="1"/>
</dbReference>
<dbReference type="Gene3D" id="1.25.40.90">
    <property type="match status" value="1"/>
</dbReference>
<dbReference type="Gene3D" id="2.30.30.140">
    <property type="match status" value="1"/>
</dbReference>
<dbReference type="InterPro" id="IPR006569">
    <property type="entry name" value="CID_dom"/>
</dbReference>
<dbReference type="InterPro" id="IPR008942">
    <property type="entry name" value="ENTH_VHS"/>
</dbReference>
<dbReference type="InterPro" id="IPR000313">
    <property type="entry name" value="PWWP_dom"/>
</dbReference>
<dbReference type="PANTHER" id="PTHR12550">
    <property type="entry name" value="HEPATOMA-DERIVED GROWTH FACTOR-RELATED"/>
    <property type="match status" value="1"/>
</dbReference>
<dbReference type="PANTHER" id="PTHR12550:SF49">
    <property type="entry name" value="PROTEIN HUA2-LIKE 2-RELATED"/>
    <property type="match status" value="1"/>
</dbReference>
<dbReference type="Pfam" id="PF04818">
    <property type="entry name" value="CID"/>
    <property type="match status" value="1"/>
</dbReference>
<dbReference type="Pfam" id="PF00855">
    <property type="entry name" value="PWWP"/>
    <property type="match status" value="1"/>
</dbReference>
<dbReference type="SMART" id="SM00293">
    <property type="entry name" value="PWWP"/>
    <property type="match status" value="1"/>
</dbReference>
<dbReference type="SMART" id="SM00582">
    <property type="entry name" value="RPR"/>
    <property type="match status" value="1"/>
</dbReference>
<dbReference type="SUPFAM" id="SSF63748">
    <property type="entry name" value="Tudor/PWWP/MBT"/>
    <property type="match status" value="1"/>
</dbReference>
<dbReference type="PROSITE" id="PS51391">
    <property type="entry name" value="CID"/>
    <property type="match status" value="1"/>
</dbReference>
<dbReference type="PROSITE" id="PS50812">
    <property type="entry name" value="PWWP"/>
    <property type="match status" value="1"/>
</dbReference>
<organism>
    <name type="scientific">Arabidopsis thaliana</name>
    <name type="common">Mouse-ear cress</name>
    <dbReference type="NCBI Taxonomy" id="3702"/>
    <lineage>
        <taxon>Eukaryota</taxon>
        <taxon>Viridiplantae</taxon>
        <taxon>Streptophyta</taxon>
        <taxon>Embryophyta</taxon>
        <taxon>Tracheophyta</taxon>
        <taxon>Spermatophyta</taxon>
        <taxon>Magnoliopsida</taxon>
        <taxon>eudicotyledons</taxon>
        <taxon>Gunneridae</taxon>
        <taxon>Pentapetalae</taxon>
        <taxon>rosids</taxon>
        <taxon>malvids</taxon>
        <taxon>Brassicales</taxon>
        <taxon>Brassicaceae</taxon>
        <taxon>Camelineae</taxon>
        <taxon>Arabidopsis</taxon>
    </lineage>
</organism>
<protein>
    <recommendedName>
        <fullName evidence="5">Protein HUA2-LIKE 3</fullName>
    </recommendedName>
    <alternativeName>
        <fullName evidence="6">HUA2-like protein 3</fullName>
    </alternativeName>
</protein>
<gene>
    <name evidence="5" type="primary">HULK3</name>
    <name evidence="7" type="ordered locus">At3g63070</name>
    <name type="ORF">T20O10_170</name>
</gene>
<reference key="1">
    <citation type="journal article" date="2000" name="Nature">
        <title>Sequence and analysis of chromosome 3 of the plant Arabidopsis thaliana.</title>
        <authorList>
            <person name="Salanoubat M."/>
            <person name="Lemcke K."/>
            <person name="Rieger M."/>
            <person name="Ansorge W."/>
            <person name="Unseld M."/>
            <person name="Fartmann B."/>
            <person name="Valle G."/>
            <person name="Bloecker H."/>
            <person name="Perez-Alonso M."/>
            <person name="Obermaier B."/>
            <person name="Delseny M."/>
            <person name="Boutry M."/>
            <person name="Grivell L.A."/>
            <person name="Mache R."/>
            <person name="Puigdomenech P."/>
            <person name="De Simone V."/>
            <person name="Choisne N."/>
            <person name="Artiguenave F."/>
            <person name="Robert C."/>
            <person name="Brottier P."/>
            <person name="Wincker P."/>
            <person name="Cattolico L."/>
            <person name="Weissenbach J."/>
            <person name="Saurin W."/>
            <person name="Quetier F."/>
            <person name="Schaefer M."/>
            <person name="Mueller-Auer S."/>
            <person name="Gabel C."/>
            <person name="Fuchs M."/>
            <person name="Benes V."/>
            <person name="Wurmbach E."/>
            <person name="Drzonek H."/>
            <person name="Erfle H."/>
            <person name="Jordan N."/>
            <person name="Bangert S."/>
            <person name="Wiedelmann R."/>
            <person name="Kranz H."/>
            <person name="Voss H."/>
            <person name="Holland R."/>
            <person name="Brandt P."/>
            <person name="Nyakatura G."/>
            <person name="Vezzi A."/>
            <person name="D'Angelo M."/>
            <person name="Pallavicini A."/>
            <person name="Toppo S."/>
            <person name="Simionati B."/>
            <person name="Conrad A."/>
            <person name="Hornischer K."/>
            <person name="Kauer G."/>
            <person name="Loehnert T.-H."/>
            <person name="Nordsiek G."/>
            <person name="Reichelt J."/>
            <person name="Scharfe M."/>
            <person name="Schoen O."/>
            <person name="Bargues M."/>
            <person name="Terol J."/>
            <person name="Climent J."/>
            <person name="Navarro P."/>
            <person name="Collado C."/>
            <person name="Perez-Perez A."/>
            <person name="Ottenwaelder B."/>
            <person name="Duchemin D."/>
            <person name="Cooke R."/>
            <person name="Laudie M."/>
            <person name="Berger-Llauro C."/>
            <person name="Purnelle B."/>
            <person name="Masuy D."/>
            <person name="de Haan M."/>
            <person name="Maarse A.C."/>
            <person name="Alcaraz J.-P."/>
            <person name="Cottet A."/>
            <person name="Casacuberta E."/>
            <person name="Monfort A."/>
            <person name="Argiriou A."/>
            <person name="Flores M."/>
            <person name="Liguori R."/>
            <person name="Vitale D."/>
            <person name="Mannhaupt G."/>
            <person name="Haase D."/>
            <person name="Schoof H."/>
            <person name="Rudd S."/>
            <person name="Zaccaria P."/>
            <person name="Mewes H.-W."/>
            <person name="Mayer K.F.X."/>
            <person name="Kaul S."/>
            <person name="Town C.D."/>
            <person name="Koo H.L."/>
            <person name="Tallon L.J."/>
            <person name="Jenkins J."/>
            <person name="Rooney T."/>
            <person name="Rizzo M."/>
            <person name="Walts A."/>
            <person name="Utterback T."/>
            <person name="Fujii C.Y."/>
            <person name="Shea T.P."/>
            <person name="Creasy T.H."/>
            <person name="Haas B."/>
            <person name="Maiti R."/>
            <person name="Wu D."/>
            <person name="Peterson J."/>
            <person name="Van Aken S."/>
            <person name="Pai G."/>
            <person name="Militscher J."/>
            <person name="Sellers P."/>
            <person name="Gill J.E."/>
            <person name="Feldblyum T.V."/>
            <person name="Preuss D."/>
            <person name="Lin X."/>
            <person name="Nierman W.C."/>
            <person name="Salzberg S.L."/>
            <person name="White O."/>
            <person name="Venter J.C."/>
            <person name="Fraser C.M."/>
            <person name="Kaneko T."/>
            <person name="Nakamura Y."/>
            <person name="Sato S."/>
            <person name="Kato T."/>
            <person name="Asamizu E."/>
            <person name="Sasamoto S."/>
            <person name="Kimura T."/>
            <person name="Idesawa K."/>
            <person name="Kawashima K."/>
            <person name="Kishida Y."/>
            <person name="Kiyokawa C."/>
            <person name="Kohara M."/>
            <person name="Matsumoto M."/>
            <person name="Matsuno A."/>
            <person name="Muraki A."/>
            <person name="Nakayama S."/>
            <person name="Nakazaki N."/>
            <person name="Shinpo S."/>
            <person name="Takeuchi C."/>
            <person name="Wada T."/>
            <person name="Watanabe A."/>
            <person name="Yamada M."/>
            <person name="Yasuda M."/>
            <person name="Tabata S."/>
        </authorList>
    </citation>
    <scope>NUCLEOTIDE SEQUENCE [LARGE SCALE GENOMIC DNA]</scope>
    <source>
        <strain>cv. Columbia</strain>
    </source>
</reference>
<reference key="2">
    <citation type="journal article" date="2017" name="Plant J.">
        <title>Araport11: a complete reannotation of the Arabidopsis thaliana reference genome.</title>
        <authorList>
            <person name="Cheng C.Y."/>
            <person name="Krishnakumar V."/>
            <person name="Chan A.P."/>
            <person name="Thibaud-Nissen F."/>
            <person name="Schobel S."/>
            <person name="Town C.D."/>
        </authorList>
    </citation>
    <scope>GENOME REANNOTATION</scope>
    <source>
        <strain>cv. Columbia</strain>
    </source>
</reference>
<reference key="3">
    <citation type="journal article" date="2014" name="Plant J.">
        <title>A plant-specific HUA2-LIKE (HULK) gene family in Arabidopsis thaliana is essential for development.</title>
        <authorList>
            <person name="Jali S.S."/>
            <person name="Rosloski S.M."/>
            <person name="Janakirama P."/>
            <person name="Steffen J.G."/>
            <person name="Zhurov V."/>
            <person name="Berleth T."/>
            <person name="Clark R.M."/>
            <person name="Grbic V."/>
        </authorList>
    </citation>
    <scope>FUNCTION</scope>
    <scope>SUBCELLULAR LOCATION</scope>
    <scope>TISSUE SPECIFICITY</scope>
    <scope>DISRUPTION PHENOTYPE</scope>
</reference>
<proteinExistence type="evidence at transcript level"/>
<sequence>MAPSRKRGGGRAAAASSARREWKVGDLVLAKVKGFPAWPAVVDEPEKWGHSADSKKVTVHFFGTQQIAFCNHGDVESFTEEKKQSLLTRRHAKGSDFVRAVKEITESYEKLKQQDQASGPKYAEETTAGSSGNTSQLPQACENLIGSRLDTQIESSSSHGRDELTLLSEDASAAEQMLALRHNTLAHNGACDSAAAKDLCEIATYSSRRRNERVRALKYAPQSIILPVEHSKISSRLELDRVQRSMLQCSDGGPSVNSINGKAIRRRKRIRTSGQSESDDVVSSDLNLHGSDEDNASEIATVESNNNSRNEGNGVDSGSKVEYSDAVGEGCDGGHELNKGLDFHISTMVKRKKRKPTRKRETSDIIDPPAKVEAEGLGPNACDSCQRSQNSHERLNERPCEENGDEHLPLVKRARVRMSRAFYADEKVNASSQVEERSSKDTLLSAALQTSPSVNHENGIGSGHDTSAAEEFNSFELSAKLSGVMVDVVPSHMEKPSDRMSPSVACVQTVGDRQTAVNFHENEFTMTLDDEVTRAQSNQLSSLVETEARVPEVVQGCSEESQTGNCLISETDPIDIQCSHQSEKHETPLNPDIVDSSANKSPGLCSSLDMTTTVVPAQSPHQHKIQEYDSSDHSLVIVGDSLNGKCEKIDYCMTQVVQSQALEPPPPLFCSVVNYQEVENLQETENTLWKENQGSPGKELDSDKQAHMIQNPVLSATESEMIVDDAEPQYETVYSHCADAVENRELEKSCEVDEQKEQMQATNSISVSENFSREKLNSSPARGTPNCNSVCRISTAESENAMQNNSYYSTNVQYGENKSLNVDTVKEESKVETGTTQVKKVVSSDVQCTVESFETALDSLVRTKETIGRATRLAMDLAKFGVSAKAMEILAHTLESESNLQRRVDLFFLVDSIAQCSKGLNGDAGGVYLSSIQAMLPRLLTAAVPAGATTQENRKQCLKVLRLWLERRILPESIVRHHIRELDSLSNVPACLYSRRSARTERALDDPVRDMEGILVDEYGSNSTLQLHGFCIPPILRDEDEGSDSDGGDFESVTPEHESRSLEEHVTPSITERHTRILEDVDGELEMEDVAPPWEGGSSASAITDQADNRESANCLLVPGTSHQNVTSSSPPARPSQNAQLAMSNSYSNGFDYRRNPSMQGDYHAGPPRMNPPMHYGSPEPSYSSRVSLSKSMPRGEGSNFQHRPYPSSHPPPPPPSHHYSYMEPDHHIKSRREGLSYPHRSHYTLEFDERNYQDSYERMRPEPCENRDNWRYHPPSSHGPRYHDRHKGPHQSSSYSGHHRDSGRLQNNRWSDSPRAYNNRHSYHYKQHSEGPVPVGMRDPGTWHQR</sequence>